<name>CINA_STRGC</name>
<proteinExistence type="inferred from homology"/>
<organism>
    <name type="scientific">Streptococcus gordonii (strain Challis / ATCC 35105 / BCRC 15272 / CH1 / DL1 / V288)</name>
    <dbReference type="NCBI Taxonomy" id="467705"/>
    <lineage>
        <taxon>Bacteria</taxon>
        <taxon>Bacillati</taxon>
        <taxon>Bacillota</taxon>
        <taxon>Bacilli</taxon>
        <taxon>Lactobacillales</taxon>
        <taxon>Streptococcaceae</taxon>
        <taxon>Streptococcus</taxon>
    </lineage>
</organism>
<accession>A8AZT4</accession>
<comment type="similarity">
    <text evidence="1">Belongs to the CinA family.</text>
</comment>
<evidence type="ECO:0000255" key="1">
    <source>
        <dbReference type="HAMAP-Rule" id="MF_00226"/>
    </source>
</evidence>
<protein>
    <recommendedName>
        <fullName evidence="1">Putative competence-damage inducible protein</fullName>
    </recommendedName>
</protein>
<reference key="1">
    <citation type="journal article" date="2007" name="J. Bacteriol.">
        <title>Genome-wide transcriptional changes in Streptococcus gordonii in response to competence signaling peptide.</title>
        <authorList>
            <person name="Vickerman M.M."/>
            <person name="Iobst S."/>
            <person name="Jesionowski A.M."/>
            <person name="Gill S.R."/>
        </authorList>
    </citation>
    <scope>NUCLEOTIDE SEQUENCE [LARGE SCALE GENOMIC DNA]</scope>
    <source>
        <strain>Challis / ATCC 35105 / BCRC 15272 / CH1 / DL1 / V288</strain>
    </source>
</reference>
<sequence length="418" mass="44695">MKAEIIAVGTEILTGQIVNTNAQFLSEKLASLGIDVYFQTAVGDNESRLLSILEIAKGRSNLIILTGGLGPTEDDLTKQTLAKFLGRELSFDPDAVEKLDRFFASRPDYARTPNNERQAQLVEGSTPLPNATGLAVGGILEVDGVTYVVLPGPPSELKPMVNNELVPLLSTGQKLYSRVLRFFGIGESQLVTILSEMIDQQSDPTIAPYAKTGEVTLRLSTKALSQAEADAKFEAVEKEILSHKTFEDQSLSEIFYGYGDDNSLAQVAFDLLKSQGKTISAAESLTAGLFQATLADFAGASAIFSGGFVTYSMEEKSRMLDIPLGDLEEHGVVSAFTAGKMAEQARKLTESDLAVSLTGVAGPDSLEDHPAGTVFIGLASAAGTETIKVNIAGRSRRDVRKIAVLHAFNLVRSTLLNS</sequence>
<keyword id="KW-1185">Reference proteome</keyword>
<dbReference type="EMBL" id="CP000725">
    <property type="protein sequence ID" value="ABV10689.1"/>
    <property type="molecule type" value="Genomic_DNA"/>
</dbReference>
<dbReference type="RefSeq" id="WP_012131015.1">
    <property type="nucleotide sequence ID" value="NC_009785.1"/>
</dbReference>
<dbReference type="SMR" id="A8AZT4"/>
<dbReference type="STRING" id="467705.SGO_2046"/>
<dbReference type="KEGG" id="sgo:SGO_2046"/>
<dbReference type="eggNOG" id="COG1058">
    <property type="taxonomic scope" value="Bacteria"/>
</dbReference>
<dbReference type="eggNOG" id="COG1546">
    <property type="taxonomic scope" value="Bacteria"/>
</dbReference>
<dbReference type="HOGENOM" id="CLU_030805_9_3_9"/>
<dbReference type="Proteomes" id="UP000001131">
    <property type="component" value="Chromosome"/>
</dbReference>
<dbReference type="CDD" id="cd00885">
    <property type="entry name" value="cinA"/>
    <property type="match status" value="1"/>
</dbReference>
<dbReference type="Gene3D" id="3.30.70.2860">
    <property type="match status" value="1"/>
</dbReference>
<dbReference type="Gene3D" id="3.90.950.20">
    <property type="entry name" value="CinA-like"/>
    <property type="match status" value="1"/>
</dbReference>
<dbReference type="Gene3D" id="3.40.980.10">
    <property type="entry name" value="MoaB/Mog-like domain"/>
    <property type="match status" value="1"/>
</dbReference>
<dbReference type="HAMAP" id="MF_00226_B">
    <property type="entry name" value="CinA_B"/>
    <property type="match status" value="1"/>
</dbReference>
<dbReference type="InterPro" id="IPR050101">
    <property type="entry name" value="CinA"/>
</dbReference>
<dbReference type="InterPro" id="IPR036653">
    <property type="entry name" value="CinA-like_C"/>
</dbReference>
<dbReference type="InterPro" id="IPR008136">
    <property type="entry name" value="CinA_C"/>
</dbReference>
<dbReference type="InterPro" id="IPR041424">
    <property type="entry name" value="CinA_KH"/>
</dbReference>
<dbReference type="InterPro" id="IPR008135">
    <property type="entry name" value="Competence-induced_CinA"/>
</dbReference>
<dbReference type="InterPro" id="IPR036425">
    <property type="entry name" value="MoaB/Mog-like_dom_sf"/>
</dbReference>
<dbReference type="InterPro" id="IPR001453">
    <property type="entry name" value="MoaB/Mog_dom"/>
</dbReference>
<dbReference type="NCBIfam" id="TIGR00200">
    <property type="entry name" value="cinA_nterm"/>
    <property type="match status" value="1"/>
</dbReference>
<dbReference type="NCBIfam" id="TIGR00199">
    <property type="entry name" value="PncC_domain"/>
    <property type="match status" value="1"/>
</dbReference>
<dbReference type="NCBIfam" id="NF001813">
    <property type="entry name" value="PRK00549.1"/>
    <property type="match status" value="1"/>
</dbReference>
<dbReference type="PANTHER" id="PTHR13939">
    <property type="entry name" value="NICOTINAMIDE-NUCLEOTIDE AMIDOHYDROLASE PNCC"/>
    <property type="match status" value="1"/>
</dbReference>
<dbReference type="PANTHER" id="PTHR13939:SF0">
    <property type="entry name" value="NMN AMIDOHYDROLASE-LIKE PROTEIN YFAY"/>
    <property type="match status" value="1"/>
</dbReference>
<dbReference type="Pfam" id="PF02464">
    <property type="entry name" value="CinA"/>
    <property type="match status" value="1"/>
</dbReference>
<dbReference type="Pfam" id="PF18146">
    <property type="entry name" value="CinA_KH"/>
    <property type="match status" value="1"/>
</dbReference>
<dbReference type="Pfam" id="PF00994">
    <property type="entry name" value="MoCF_biosynth"/>
    <property type="match status" value="1"/>
</dbReference>
<dbReference type="PIRSF" id="PIRSF006728">
    <property type="entry name" value="CinA"/>
    <property type="match status" value="1"/>
</dbReference>
<dbReference type="SMART" id="SM00852">
    <property type="entry name" value="MoCF_biosynth"/>
    <property type="match status" value="1"/>
</dbReference>
<dbReference type="SUPFAM" id="SSF142433">
    <property type="entry name" value="CinA-like"/>
    <property type="match status" value="1"/>
</dbReference>
<dbReference type="SUPFAM" id="SSF53218">
    <property type="entry name" value="Molybdenum cofactor biosynthesis proteins"/>
    <property type="match status" value="1"/>
</dbReference>
<gene>
    <name evidence="1" type="primary">cinA</name>
    <name type="ordered locus">SGO_2046</name>
</gene>
<feature type="chain" id="PRO_1000078185" description="Putative competence-damage inducible protein">
    <location>
        <begin position="1"/>
        <end position="418"/>
    </location>
</feature>